<reference key="1">
    <citation type="journal article" date="2008" name="PLoS ONE">
        <title>Genome sequence of Brucella abortus vaccine strain S19 compared to virulent strains yields candidate virulence genes.</title>
        <authorList>
            <person name="Crasta O.R."/>
            <person name="Folkerts O."/>
            <person name="Fei Z."/>
            <person name="Mane S.P."/>
            <person name="Evans C."/>
            <person name="Martino-Catt S."/>
            <person name="Bricker B."/>
            <person name="Yu G."/>
            <person name="Du L."/>
            <person name="Sobral B.W."/>
        </authorList>
    </citation>
    <scope>NUCLEOTIDE SEQUENCE [LARGE SCALE GENOMIC DNA]</scope>
    <source>
        <strain>S19</strain>
    </source>
</reference>
<comment type="function">
    <text evidence="1">Catalyzes the methylthiolation of an aspartic acid residue of ribosomal protein uS12.</text>
</comment>
<comment type="catalytic activity">
    <reaction evidence="1">
        <text>L-aspartate(89)-[ribosomal protein uS12]-hydrogen + (sulfur carrier)-SH + AH2 + 2 S-adenosyl-L-methionine = 3-methylsulfanyl-L-aspartate(89)-[ribosomal protein uS12]-hydrogen + (sulfur carrier)-H + 5'-deoxyadenosine + L-methionine + A + S-adenosyl-L-homocysteine + 2 H(+)</text>
        <dbReference type="Rhea" id="RHEA:37087"/>
        <dbReference type="Rhea" id="RHEA-COMP:10460"/>
        <dbReference type="Rhea" id="RHEA-COMP:10461"/>
        <dbReference type="Rhea" id="RHEA-COMP:14737"/>
        <dbReference type="Rhea" id="RHEA-COMP:14739"/>
        <dbReference type="ChEBI" id="CHEBI:13193"/>
        <dbReference type="ChEBI" id="CHEBI:15378"/>
        <dbReference type="ChEBI" id="CHEBI:17319"/>
        <dbReference type="ChEBI" id="CHEBI:17499"/>
        <dbReference type="ChEBI" id="CHEBI:29917"/>
        <dbReference type="ChEBI" id="CHEBI:29961"/>
        <dbReference type="ChEBI" id="CHEBI:57844"/>
        <dbReference type="ChEBI" id="CHEBI:57856"/>
        <dbReference type="ChEBI" id="CHEBI:59789"/>
        <dbReference type="ChEBI" id="CHEBI:64428"/>
        <dbReference type="ChEBI" id="CHEBI:73599"/>
        <dbReference type="EC" id="2.8.4.4"/>
    </reaction>
</comment>
<comment type="cofactor">
    <cofactor evidence="1">
        <name>[4Fe-4S] cluster</name>
        <dbReference type="ChEBI" id="CHEBI:49883"/>
    </cofactor>
    <text evidence="1">Binds 2 [4Fe-4S] clusters. One cluster is coordinated with 3 cysteines and an exchangeable S-adenosyl-L-methionine.</text>
</comment>
<comment type="subcellular location">
    <subcellularLocation>
        <location evidence="1">Cytoplasm</location>
    </subcellularLocation>
</comment>
<comment type="similarity">
    <text evidence="1">Belongs to the methylthiotransferase family. RimO subfamily.</text>
</comment>
<evidence type="ECO:0000255" key="1">
    <source>
        <dbReference type="HAMAP-Rule" id="MF_01865"/>
    </source>
</evidence>
<evidence type="ECO:0000255" key="2">
    <source>
        <dbReference type="PROSITE-ProRule" id="PRU01266"/>
    </source>
</evidence>
<dbReference type="EC" id="2.8.4.4" evidence="1"/>
<dbReference type="EMBL" id="CP000888">
    <property type="protein sequence ID" value="ACD74126.1"/>
    <property type="molecule type" value="Genomic_DNA"/>
</dbReference>
<dbReference type="RefSeq" id="WP_002966068.1">
    <property type="nucleotide sequence ID" value="NC_010740.1"/>
</dbReference>
<dbReference type="SMR" id="B2SB89"/>
<dbReference type="GeneID" id="93015440"/>
<dbReference type="KEGG" id="bmc:BAbS19_II06310"/>
<dbReference type="HOGENOM" id="CLU_018697_0_0_5"/>
<dbReference type="Proteomes" id="UP000002565">
    <property type="component" value="Chromosome 2"/>
</dbReference>
<dbReference type="GO" id="GO:0005829">
    <property type="term" value="C:cytosol"/>
    <property type="evidence" value="ECO:0007669"/>
    <property type="project" value="TreeGrafter"/>
</dbReference>
<dbReference type="GO" id="GO:0051539">
    <property type="term" value="F:4 iron, 4 sulfur cluster binding"/>
    <property type="evidence" value="ECO:0007669"/>
    <property type="project" value="UniProtKB-UniRule"/>
</dbReference>
<dbReference type="GO" id="GO:0035599">
    <property type="term" value="F:aspartic acid methylthiotransferase activity"/>
    <property type="evidence" value="ECO:0007669"/>
    <property type="project" value="TreeGrafter"/>
</dbReference>
<dbReference type="GO" id="GO:0046872">
    <property type="term" value="F:metal ion binding"/>
    <property type="evidence" value="ECO:0007669"/>
    <property type="project" value="UniProtKB-KW"/>
</dbReference>
<dbReference type="GO" id="GO:0103039">
    <property type="term" value="F:protein methylthiotransferase activity"/>
    <property type="evidence" value="ECO:0007669"/>
    <property type="project" value="UniProtKB-EC"/>
</dbReference>
<dbReference type="GO" id="GO:0006400">
    <property type="term" value="P:tRNA modification"/>
    <property type="evidence" value="ECO:0007669"/>
    <property type="project" value="InterPro"/>
</dbReference>
<dbReference type="CDD" id="cd01335">
    <property type="entry name" value="Radical_SAM"/>
    <property type="match status" value="1"/>
</dbReference>
<dbReference type="FunFam" id="3.40.50.12160:FF:000002">
    <property type="entry name" value="Ribosomal protein S12 methylthiotransferase RimO"/>
    <property type="match status" value="1"/>
</dbReference>
<dbReference type="FunFam" id="3.80.30.20:FF:000001">
    <property type="entry name" value="tRNA-2-methylthio-N(6)-dimethylallyladenosine synthase 2"/>
    <property type="match status" value="1"/>
</dbReference>
<dbReference type="Gene3D" id="3.40.50.12160">
    <property type="entry name" value="Methylthiotransferase, N-terminal domain"/>
    <property type="match status" value="1"/>
</dbReference>
<dbReference type="Gene3D" id="2.40.50.140">
    <property type="entry name" value="Nucleic acid-binding proteins"/>
    <property type="match status" value="1"/>
</dbReference>
<dbReference type="Gene3D" id="3.80.30.20">
    <property type="entry name" value="tm_1862 like domain"/>
    <property type="match status" value="1"/>
</dbReference>
<dbReference type="HAMAP" id="MF_01865">
    <property type="entry name" value="MTTase_RimO"/>
    <property type="match status" value="1"/>
</dbReference>
<dbReference type="InterPro" id="IPR006638">
    <property type="entry name" value="Elp3/MiaA/NifB-like_rSAM"/>
</dbReference>
<dbReference type="InterPro" id="IPR005839">
    <property type="entry name" value="Methylthiotransferase"/>
</dbReference>
<dbReference type="InterPro" id="IPR020612">
    <property type="entry name" value="Methylthiotransferase_CS"/>
</dbReference>
<dbReference type="InterPro" id="IPR013848">
    <property type="entry name" value="Methylthiotransferase_N"/>
</dbReference>
<dbReference type="InterPro" id="IPR038135">
    <property type="entry name" value="Methylthiotransferase_N_sf"/>
</dbReference>
<dbReference type="InterPro" id="IPR012340">
    <property type="entry name" value="NA-bd_OB-fold"/>
</dbReference>
<dbReference type="InterPro" id="IPR005840">
    <property type="entry name" value="Ribosomal_uS12_MeSTrfase_RimO"/>
</dbReference>
<dbReference type="InterPro" id="IPR007197">
    <property type="entry name" value="rSAM"/>
</dbReference>
<dbReference type="InterPro" id="IPR023404">
    <property type="entry name" value="rSAM_horseshoe"/>
</dbReference>
<dbReference type="InterPro" id="IPR002792">
    <property type="entry name" value="TRAM_dom"/>
</dbReference>
<dbReference type="NCBIfam" id="TIGR01125">
    <property type="entry name" value="30S ribosomal protein S12 methylthiotransferase RimO"/>
    <property type="match status" value="1"/>
</dbReference>
<dbReference type="NCBIfam" id="TIGR00089">
    <property type="entry name" value="MiaB/RimO family radical SAM methylthiotransferase"/>
    <property type="match status" value="1"/>
</dbReference>
<dbReference type="PANTHER" id="PTHR43837">
    <property type="entry name" value="RIBOSOMAL PROTEIN S12 METHYLTHIOTRANSFERASE RIMO"/>
    <property type="match status" value="1"/>
</dbReference>
<dbReference type="PANTHER" id="PTHR43837:SF1">
    <property type="entry name" value="RIBOSOMAL PROTEIN US12 METHYLTHIOTRANSFERASE RIMO"/>
    <property type="match status" value="1"/>
</dbReference>
<dbReference type="Pfam" id="PF04055">
    <property type="entry name" value="Radical_SAM"/>
    <property type="match status" value="1"/>
</dbReference>
<dbReference type="Pfam" id="PF18693">
    <property type="entry name" value="TRAM_2"/>
    <property type="match status" value="1"/>
</dbReference>
<dbReference type="Pfam" id="PF00919">
    <property type="entry name" value="UPF0004"/>
    <property type="match status" value="1"/>
</dbReference>
<dbReference type="SFLD" id="SFLDG01082">
    <property type="entry name" value="B12-binding_domain_containing"/>
    <property type="match status" value="1"/>
</dbReference>
<dbReference type="SFLD" id="SFLDG01061">
    <property type="entry name" value="methylthiotransferase"/>
    <property type="match status" value="1"/>
</dbReference>
<dbReference type="SFLD" id="SFLDF00274">
    <property type="entry name" value="ribosomal_protein_S12_methylth"/>
    <property type="match status" value="1"/>
</dbReference>
<dbReference type="SMART" id="SM00729">
    <property type="entry name" value="Elp3"/>
    <property type="match status" value="1"/>
</dbReference>
<dbReference type="SUPFAM" id="SSF102114">
    <property type="entry name" value="Radical SAM enzymes"/>
    <property type="match status" value="1"/>
</dbReference>
<dbReference type="PROSITE" id="PS51449">
    <property type="entry name" value="MTTASE_N"/>
    <property type="match status" value="1"/>
</dbReference>
<dbReference type="PROSITE" id="PS01278">
    <property type="entry name" value="MTTASE_RADICAL"/>
    <property type="match status" value="1"/>
</dbReference>
<dbReference type="PROSITE" id="PS51918">
    <property type="entry name" value="RADICAL_SAM"/>
    <property type="match status" value="1"/>
</dbReference>
<dbReference type="PROSITE" id="PS50926">
    <property type="entry name" value="TRAM"/>
    <property type="match status" value="1"/>
</dbReference>
<name>RIMO_BRUA1</name>
<gene>
    <name evidence="1" type="primary">rimO</name>
    <name type="ordered locus">BAbS19_II06310</name>
</gene>
<organism>
    <name type="scientific">Brucella abortus (strain S19)</name>
    <dbReference type="NCBI Taxonomy" id="430066"/>
    <lineage>
        <taxon>Bacteria</taxon>
        <taxon>Pseudomonadati</taxon>
        <taxon>Pseudomonadota</taxon>
        <taxon>Alphaproteobacteria</taxon>
        <taxon>Hyphomicrobiales</taxon>
        <taxon>Brucellaceae</taxon>
        <taxon>Brucella/Ochrobactrum group</taxon>
        <taxon>Brucella</taxon>
    </lineage>
</organism>
<accession>B2SB89</accession>
<feature type="chain" id="PRO_0000374722" description="Ribosomal protein uS12 methylthiotransferase RimO">
    <location>
        <begin position="1"/>
        <end position="437"/>
    </location>
</feature>
<feature type="domain" description="MTTase N-terminal" evidence="1">
    <location>
        <begin position="4"/>
        <end position="114"/>
    </location>
</feature>
<feature type="domain" description="Radical SAM core" evidence="2">
    <location>
        <begin position="131"/>
        <end position="369"/>
    </location>
</feature>
<feature type="domain" description="TRAM" evidence="1">
    <location>
        <begin position="372"/>
        <end position="437"/>
    </location>
</feature>
<feature type="binding site" evidence="1">
    <location>
        <position position="13"/>
    </location>
    <ligand>
        <name>[4Fe-4S] cluster</name>
        <dbReference type="ChEBI" id="CHEBI:49883"/>
        <label>1</label>
    </ligand>
</feature>
<feature type="binding site" evidence="1">
    <location>
        <position position="49"/>
    </location>
    <ligand>
        <name>[4Fe-4S] cluster</name>
        <dbReference type="ChEBI" id="CHEBI:49883"/>
        <label>1</label>
    </ligand>
</feature>
<feature type="binding site" evidence="1">
    <location>
        <position position="78"/>
    </location>
    <ligand>
        <name>[4Fe-4S] cluster</name>
        <dbReference type="ChEBI" id="CHEBI:49883"/>
        <label>1</label>
    </ligand>
</feature>
<feature type="binding site" evidence="1">
    <location>
        <position position="145"/>
    </location>
    <ligand>
        <name>[4Fe-4S] cluster</name>
        <dbReference type="ChEBI" id="CHEBI:49883"/>
        <label>2</label>
        <note>4Fe-4S-S-AdoMet</note>
    </ligand>
</feature>
<feature type="binding site" evidence="1">
    <location>
        <position position="149"/>
    </location>
    <ligand>
        <name>[4Fe-4S] cluster</name>
        <dbReference type="ChEBI" id="CHEBI:49883"/>
        <label>2</label>
        <note>4Fe-4S-S-AdoMet</note>
    </ligand>
</feature>
<feature type="binding site" evidence="1">
    <location>
        <position position="152"/>
    </location>
    <ligand>
        <name>[4Fe-4S] cluster</name>
        <dbReference type="ChEBI" id="CHEBI:49883"/>
        <label>2</label>
        <note>4Fe-4S-S-AdoMet</note>
    </ligand>
</feature>
<sequence length="437" mass="48774">MSAPRVSFVSLGCPKALVDSERIITGLRSEGYEISRKHDGADLVIVNTCGFLDSARDESLEAIGLALNENGKVIVTGCLGAEPDVIRERHPNVLAITGPQAYESVMNAVHEVAPPAHDPFVDLVPPQGVKLTPRHYAYLKISEGCSNRCSFCIIPALRGDLVSRPINEVLREAEKLVQAGVKEILVISQDTSAYGLDIKYQEAMWQDRTVRTKFLDLSRELGEMGVWVRMHYVYPYPHVDEVIPLMAEGKILPYLDIPFQHASPAVLKNMRRPAHQEKTSRRIQAWRETCPDLAVRSTFIVGYPGETEEDFQMLLDWLDEAKIERAGCFKYEAVKGAKANDLGLEQVPEEVKEARWHRFMAKQQQISTNLLKKKVGKRLPVIIDEANGTIGKGRTRYDAPEIDGSVHISSRRPLRVGDIVTVKIEASDAYDLHGTAV</sequence>
<keyword id="KW-0004">4Fe-4S</keyword>
<keyword id="KW-0963">Cytoplasm</keyword>
<keyword id="KW-0408">Iron</keyword>
<keyword id="KW-0411">Iron-sulfur</keyword>
<keyword id="KW-0479">Metal-binding</keyword>
<keyword id="KW-0949">S-adenosyl-L-methionine</keyword>
<keyword id="KW-0808">Transferase</keyword>
<protein>
    <recommendedName>
        <fullName evidence="1">Ribosomal protein uS12 methylthiotransferase RimO</fullName>
        <shortName evidence="1">uS12 MTTase</shortName>
        <shortName evidence="1">uS12 methylthiotransferase</shortName>
        <ecNumber evidence="1">2.8.4.4</ecNumber>
    </recommendedName>
    <alternativeName>
        <fullName evidence="1">Ribosomal protein uS12 (aspartate-C(3))-methylthiotransferase</fullName>
    </alternativeName>
    <alternativeName>
        <fullName evidence="1">Ribosome maturation factor RimO</fullName>
    </alternativeName>
</protein>
<proteinExistence type="inferred from homology"/>